<comment type="similarity">
    <text evidence="1">Belongs to the UPF0297 family.</text>
</comment>
<evidence type="ECO:0000255" key="1">
    <source>
        <dbReference type="HAMAP-Rule" id="MF_01507"/>
    </source>
</evidence>
<dbReference type="EMBL" id="CP001598">
    <property type="protein sequence ID" value="ACQ47957.1"/>
    <property type="molecule type" value="Genomic_DNA"/>
</dbReference>
<dbReference type="RefSeq" id="WP_000348590.1">
    <property type="nucleotide sequence ID" value="NC_012659.1"/>
</dbReference>
<dbReference type="SMR" id="C3P976"/>
<dbReference type="KEGG" id="bai:BAA_4635"/>
<dbReference type="HOGENOM" id="CLU_162466_0_0_9"/>
<dbReference type="HAMAP" id="MF_01507">
    <property type="entry name" value="UPF0297"/>
    <property type="match status" value="1"/>
</dbReference>
<dbReference type="InterPro" id="IPR009309">
    <property type="entry name" value="IreB"/>
</dbReference>
<dbReference type="NCBIfam" id="NF003997">
    <property type="entry name" value="PRK05473.1"/>
    <property type="match status" value="1"/>
</dbReference>
<dbReference type="PANTHER" id="PTHR40067">
    <property type="entry name" value="UPF0297 PROTEIN YRZL"/>
    <property type="match status" value="1"/>
</dbReference>
<dbReference type="PANTHER" id="PTHR40067:SF1">
    <property type="entry name" value="UPF0297 PROTEIN YRZL"/>
    <property type="match status" value="1"/>
</dbReference>
<dbReference type="Pfam" id="PF06135">
    <property type="entry name" value="IreB"/>
    <property type="match status" value="1"/>
</dbReference>
<dbReference type="PIRSF" id="PIRSF037258">
    <property type="entry name" value="DUF965_bac"/>
    <property type="match status" value="1"/>
</dbReference>
<protein>
    <recommendedName>
        <fullName evidence="1">UPF0297 protein BAA_4635</fullName>
    </recommendedName>
</protein>
<feature type="chain" id="PRO_1000185035" description="UPF0297 protein BAA_4635">
    <location>
        <begin position="1"/>
        <end position="88"/>
    </location>
</feature>
<accession>C3P976</accession>
<proteinExistence type="inferred from homology"/>
<organism>
    <name type="scientific">Bacillus anthracis (strain A0248)</name>
    <dbReference type="NCBI Taxonomy" id="592021"/>
    <lineage>
        <taxon>Bacteria</taxon>
        <taxon>Bacillati</taxon>
        <taxon>Bacillota</taxon>
        <taxon>Bacilli</taxon>
        <taxon>Bacillales</taxon>
        <taxon>Bacillaceae</taxon>
        <taxon>Bacillus</taxon>
        <taxon>Bacillus cereus group</taxon>
    </lineage>
</organism>
<reference key="1">
    <citation type="submission" date="2009-04" db="EMBL/GenBank/DDBJ databases">
        <title>Genome sequence of Bacillus anthracis A0248.</title>
        <authorList>
            <person name="Dodson R.J."/>
            <person name="Munk A.C."/>
            <person name="Bruce D."/>
            <person name="Detter C."/>
            <person name="Tapia R."/>
            <person name="Sutton G."/>
            <person name="Sims D."/>
            <person name="Brettin T."/>
        </authorList>
    </citation>
    <scope>NUCLEOTIDE SEQUENCE [LARGE SCALE GENOMIC DNA]</scope>
    <source>
        <strain>A0248</strain>
    </source>
</reference>
<name>Y4635_BACAA</name>
<sequence>MDGFDKTMKFSIQDEKQSVHVNDVLLTVYDALQEKGYNPINQIVGYLLSGDPAYIPRHKDARSIIRKLERDELIEELVKSYLKHHREE</sequence>
<gene>
    <name type="ordered locus">BAA_4635</name>
</gene>